<name>VABF_VIBAN</name>
<accession>Q0E7C4</accession>
<keyword id="KW-0436">Ligase</keyword>
<keyword id="KW-0596">Phosphopantetheine</keyword>
<keyword id="KW-0597">Phosphoprotein</keyword>
<keyword id="KW-0677">Repeat</keyword>
<evidence type="ECO:0000255" key="1">
    <source>
        <dbReference type="PROSITE-ProRule" id="PRU00258"/>
    </source>
</evidence>
<evidence type="ECO:0000269" key="2">
    <source>
    </source>
</evidence>
<evidence type="ECO:0000303" key="3">
    <source>
    </source>
</evidence>
<evidence type="ECO:0000305" key="4"/>
<evidence type="ECO:0000305" key="5">
    <source>
    </source>
</evidence>
<protein>
    <recommendedName>
        <fullName evidence="4">Vanchrobactin synthetase VabF</fullName>
        <ecNumber evidence="5">6.2.1.63</ecNumber>
        <ecNumber evidence="5">6.2.1.72</ecNumber>
    </recommendedName>
    <alternativeName>
        <fullName evidence="4">L-arginine--[L-arginyl-carrier protein] ligase</fullName>
    </alternativeName>
    <alternativeName>
        <fullName evidence="4">L-serine--[L-seryl-carrier protein] ligase</fullName>
    </alternativeName>
    <alternativeName>
        <fullName evidence="4">Nonribosomal peptide synthetase VabF</fullName>
    </alternativeName>
</protein>
<dbReference type="EC" id="6.2.1.63" evidence="5"/>
<dbReference type="EC" id="6.2.1.72" evidence="5"/>
<dbReference type="EMBL" id="AM168450">
    <property type="protein sequence ID" value="CAJ45639.1"/>
    <property type="molecule type" value="Genomic_DNA"/>
</dbReference>
<dbReference type="SMR" id="Q0E7C4"/>
<dbReference type="ESTHER" id="viban-vabf">
    <property type="family name" value="Thioesterase"/>
</dbReference>
<dbReference type="KEGG" id="ag:CAJ45639"/>
<dbReference type="BioCyc" id="MetaCyc:MONOMER-20477"/>
<dbReference type="BRENDA" id="6.2.1.63">
    <property type="organism ID" value="17127"/>
</dbReference>
<dbReference type="PHI-base" id="PHI:12092"/>
<dbReference type="GO" id="GO:0005829">
    <property type="term" value="C:cytosol"/>
    <property type="evidence" value="ECO:0007669"/>
    <property type="project" value="TreeGrafter"/>
</dbReference>
<dbReference type="GO" id="GO:0009366">
    <property type="term" value="C:enterobactin synthetase complex"/>
    <property type="evidence" value="ECO:0007669"/>
    <property type="project" value="TreeGrafter"/>
</dbReference>
<dbReference type="GO" id="GO:0047527">
    <property type="term" value="F:2,3-dihydroxybenzoate-serine ligase activity"/>
    <property type="evidence" value="ECO:0007669"/>
    <property type="project" value="TreeGrafter"/>
</dbReference>
<dbReference type="GO" id="GO:0031177">
    <property type="term" value="F:phosphopantetheine binding"/>
    <property type="evidence" value="ECO:0007669"/>
    <property type="project" value="InterPro"/>
</dbReference>
<dbReference type="GO" id="GO:0043041">
    <property type="term" value="P:amino acid activation for nonribosomal peptide biosynthetic process"/>
    <property type="evidence" value="ECO:0007669"/>
    <property type="project" value="TreeGrafter"/>
</dbReference>
<dbReference type="GO" id="GO:0009239">
    <property type="term" value="P:enterobactin biosynthetic process"/>
    <property type="evidence" value="ECO:0007669"/>
    <property type="project" value="TreeGrafter"/>
</dbReference>
<dbReference type="CDD" id="cd05930">
    <property type="entry name" value="A_NRPS"/>
    <property type="match status" value="1"/>
</dbReference>
<dbReference type="CDD" id="cd17646">
    <property type="entry name" value="A_NRPS_AB3403-like"/>
    <property type="match status" value="1"/>
</dbReference>
<dbReference type="FunFam" id="3.40.50.980:FF:000002">
    <property type="entry name" value="Enterobactin synthetase component F"/>
    <property type="match status" value="1"/>
</dbReference>
<dbReference type="FunFam" id="3.40.50.12780:FF:000012">
    <property type="entry name" value="Non-ribosomal peptide synthetase"/>
    <property type="match status" value="1"/>
</dbReference>
<dbReference type="FunFam" id="2.30.38.10:FF:000001">
    <property type="entry name" value="Non-ribosomal peptide synthetase PvdI"/>
    <property type="match status" value="1"/>
</dbReference>
<dbReference type="Gene3D" id="3.30.300.30">
    <property type="match status" value="2"/>
</dbReference>
<dbReference type="Gene3D" id="3.40.50.980">
    <property type="match status" value="4"/>
</dbReference>
<dbReference type="Gene3D" id="1.10.1200.10">
    <property type="entry name" value="ACP-like"/>
    <property type="match status" value="1"/>
</dbReference>
<dbReference type="Gene3D" id="3.40.50.1820">
    <property type="entry name" value="alpha/beta hydrolase"/>
    <property type="match status" value="1"/>
</dbReference>
<dbReference type="Gene3D" id="3.30.559.10">
    <property type="entry name" value="Chloramphenicol acetyltransferase-like domain"/>
    <property type="match status" value="3"/>
</dbReference>
<dbReference type="Gene3D" id="2.30.38.10">
    <property type="entry name" value="Luciferase, Domain 3"/>
    <property type="match status" value="2"/>
</dbReference>
<dbReference type="Gene3D" id="3.30.559.30">
    <property type="entry name" value="Nonribosomal peptide synthetase, condensation domain"/>
    <property type="match status" value="3"/>
</dbReference>
<dbReference type="InterPro" id="IPR010071">
    <property type="entry name" value="AA_adenyl_dom"/>
</dbReference>
<dbReference type="InterPro" id="IPR029058">
    <property type="entry name" value="AB_hydrolase_fold"/>
</dbReference>
<dbReference type="InterPro" id="IPR036736">
    <property type="entry name" value="ACP-like_sf"/>
</dbReference>
<dbReference type="InterPro" id="IPR025110">
    <property type="entry name" value="AMP-bd_C"/>
</dbReference>
<dbReference type="InterPro" id="IPR045851">
    <property type="entry name" value="AMP-bd_C_sf"/>
</dbReference>
<dbReference type="InterPro" id="IPR020845">
    <property type="entry name" value="AMP-binding_CS"/>
</dbReference>
<dbReference type="InterPro" id="IPR000873">
    <property type="entry name" value="AMP-dep_synth/lig_dom"/>
</dbReference>
<dbReference type="InterPro" id="IPR023213">
    <property type="entry name" value="CAT-like_dom_sf"/>
</dbReference>
<dbReference type="InterPro" id="IPR001242">
    <property type="entry name" value="Condensatn"/>
</dbReference>
<dbReference type="InterPro" id="IPR010060">
    <property type="entry name" value="NRPS_synth"/>
</dbReference>
<dbReference type="InterPro" id="IPR020806">
    <property type="entry name" value="PKS_PP-bd"/>
</dbReference>
<dbReference type="InterPro" id="IPR020802">
    <property type="entry name" value="PKS_thioesterase"/>
</dbReference>
<dbReference type="InterPro" id="IPR009081">
    <property type="entry name" value="PP-bd_ACP"/>
</dbReference>
<dbReference type="InterPro" id="IPR006162">
    <property type="entry name" value="Ppantetheine_attach_site"/>
</dbReference>
<dbReference type="InterPro" id="IPR001031">
    <property type="entry name" value="Thioesterase"/>
</dbReference>
<dbReference type="NCBIfam" id="TIGR01733">
    <property type="entry name" value="AA-adenyl-dom"/>
    <property type="match status" value="2"/>
</dbReference>
<dbReference type="NCBIfam" id="TIGR01720">
    <property type="entry name" value="NRPS-para261"/>
    <property type="match status" value="1"/>
</dbReference>
<dbReference type="NCBIfam" id="NF003417">
    <property type="entry name" value="PRK04813.1"/>
    <property type="match status" value="2"/>
</dbReference>
<dbReference type="PANTHER" id="PTHR45527:SF1">
    <property type="entry name" value="FATTY ACID SYNTHASE"/>
    <property type="match status" value="1"/>
</dbReference>
<dbReference type="PANTHER" id="PTHR45527">
    <property type="entry name" value="NONRIBOSOMAL PEPTIDE SYNTHETASE"/>
    <property type="match status" value="1"/>
</dbReference>
<dbReference type="Pfam" id="PF00501">
    <property type="entry name" value="AMP-binding"/>
    <property type="match status" value="2"/>
</dbReference>
<dbReference type="Pfam" id="PF13193">
    <property type="entry name" value="AMP-binding_C"/>
    <property type="match status" value="1"/>
</dbReference>
<dbReference type="Pfam" id="PF00668">
    <property type="entry name" value="Condensation"/>
    <property type="match status" value="3"/>
</dbReference>
<dbReference type="Pfam" id="PF00550">
    <property type="entry name" value="PP-binding"/>
    <property type="match status" value="2"/>
</dbReference>
<dbReference type="Pfam" id="PF00975">
    <property type="entry name" value="Thioesterase"/>
    <property type="match status" value="1"/>
</dbReference>
<dbReference type="SMART" id="SM00823">
    <property type="entry name" value="PKS_PP"/>
    <property type="match status" value="2"/>
</dbReference>
<dbReference type="SMART" id="SM00824">
    <property type="entry name" value="PKS_TE"/>
    <property type="match status" value="1"/>
</dbReference>
<dbReference type="SUPFAM" id="SSF56801">
    <property type="entry name" value="Acetyl-CoA synthetase-like"/>
    <property type="match status" value="2"/>
</dbReference>
<dbReference type="SUPFAM" id="SSF47336">
    <property type="entry name" value="ACP-like"/>
    <property type="match status" value="2"/>
</dbReference>
<dbReference type="SUPFAM" id="SSF53474">
    <property type="entry name" value="alpha/beta-Hydrolases"/>
    <property type="match status" value="1"/>
</dbReference>
<dbReference type="SUPFAM" id="SSF52777">
    <property type="entry name" value="CoA-dependent acyltransferases"/>
    <property type="match status" value="6"/>
</dbReference>
<dbReference type="PROSITE" id="PS00455">
    <property type="entry name" value="AMP_BINDING"/>
    <property type="match status" value="2"/>
</dbReference>
<dbReference type="PROSITE" id="PS50075">
    <property type="entry name" value="CARRIER"/>
    <property type="match status" value="2"/>
</dbReference>
<dbReference type="PROSITE" id="PS00012">
    <property type="entry name" value="PHOSPHOPANTETHEINE"/>
    <property type="match status" value="1"/>
</dbReference>
<proteinExistence type="inferred from homology"/>
<gene>
    <name evidence="3" type="primary">vabF</name>
</gene>
<reference key="1">
    <citation type="journal article" date="2006" name="Microbiology">
        <title>A gene cluster involved in the biosynthesis of vanchrobactin, a chromosome-encoded siderophore produced by Vibrio anguillarum.</title>
        <authorList>
            <person name="Balado M."/>
            <person name="Osorio C.R."/>
            <person name="Lemos M.L."/>
        </authorList>
    </citation>
    <scope>NUCLEOTIDE SEQUENCE [GENOMIC DNA]</scope>
    <scope>FUNCTION</scope>
    <scope>PATHWAY</scope>
    <scope>DISRUPTION PHENOTYPE</scope>
    <source>
        <strain>RV22 / Serotype O2</strain>
    </source>
</reference>
<organism>
    <name type="scientific">Vibrio anguillarum</name>
    <name type="common">Listonella anguillarum</name>
    <dbReference type="NCBI Taxonomy" id="55601"/>
    <lineage>
        <taxon>Bacteria</taxon>
        <taxon>Pseudomonadati</taxon>
        <taxon>Pseudomonadota</taxon>
        <taxon>Gammaproteobacteria</taxon>
        <taxon>Vibrionales</taxon>
        <taxon>Vibrionaceae</taxon>
        <taxon>Vibrio</taxon>
    </lineage>
</organism>
<feature type="chain" id="PRO_0000454850" description="Vanchrobactin synthetase VabF">
    <location>
        <begin position="1"/>
        <end position="2835"/>
    </location>
</feature>
<feature type="domain" description="Carrier 1" evidence="1">
    <location>
        <begin position="988"/>
        <end position="1062"/>
    </location>
</feature>
<feature type="domain" description="Carrier 2" evidence="1">
    <location>
        <begin position="2503"/>
        <end position="2578"/>
    </location>
</feature>
<feature type="region of interest" description="Condensation 1" evidence="4">
    <location>
        <begin position="16"/>
        <end position="452"/>
    </location>
</feature>
<feature type="region of interest" description="Adenylation 1" evidence="4">
    <location>
        <begin position="473"/>
        <end position="880"/>
    </location>
</feature>
<feature type="region of interest" description="Condensation 2" evidence="4">
    <location>
        <begin position="1081"/>
        <end position="1499"/>
    </location>
</feature>
<feature type="region of interest" description="Condensation 3" evidence="4">
    <location>
        <begin position="1539"/>
        <end position="1961"/>
    </location>
</feature>
<feature type="region of interest" description="Adenylation 2" evidence="4">
    <location>
        <begin position="1992"/>
        <end position="2394"/>
    </location>
</feature>
<feature type="region of interest" description="Thioesterase" evidence="4">
    <location>
        <begin position="2601"/>
        <end position="2821"/>
    </location>
</feature>
<feature type="modified residue" description="O-(pantetheine 4'-phosphoryl)serine" evidence="1">
    <location>
        <position position="1023"/>
    </location>
</feature>
<feature type="modified residue" description="O-(pantetheine 4'-phosphoryl)serine" evidence="1">
    <location>
        <position position="2538"/>
    </location>
</feature>
<comment type="function">
    <text evidence="2 5">Involved in the synthesis of the siderophore vanchrobactin (PubMed:17159203). Probably adenylates L-arginine via its first adenylation domain and loads it onto its first peptidyl carrier domain via a thioester linkage to the phosphopanthetheine moiety. In addition, may adenylate L-serine via its second adenylation domain and loads it onto its second peptidyl carrier domain via a thioester linkage to the phosphopanthetheine moiety (Probable). The thioesterase domain may release vanchrobactin after condensation of the siderophore components (Probable).</text>
</comment>
<comment type="catalytic activity">
    <reaction evidence="5">
        <text>holo-[peptidyl-carrier protein] + L-arginine + ATP = L-arginyl-[peptidyl-carrier protein] + AMP + diphosphate</text>
        <dbReference type="Rhea" id="RHEA:62492"/>
        <dbReference type="Rhea" id="RHEA-COMP:11480"/>
        <dbReference type="Rhea" id="RHEA-COMP:15940"/>
        <dbReference type="ChEBI" id="CHEBI:30616"/>
        <dbReference type="ChEBI" id="CHEBI:32682"/>
        <dbReference type="ChEBI" id="CHEBI:33019"/>
        <dbReference type="ChEBI" id="CHEBI:64479"/>
        <dbReference type="ChEBI" id="CHEBI:144966"/>
        <dbReference type="ChEBI" id="CHEBI:456215"/>
        <dbReference type="EC" id="6.2.1.63"/>
    </reaction>
    <physiologicalReaction direction="left-to-right" evidence="5">
        <dbReference type="Rhea" id="RHEA:62493"/>
    </physiologicalReaction>
</comment>
<comment type="catalytic activity">
    <reaction evidence="5">
        <text>holo-[peptidyl-carrier protein] + L-serine + ATP = L-seryl-[peptidyl-carrier protein] + AMP + diphosphate</text>
        <dbReference type="Rhea" id="RHEA:61704"/>
        <dbReference type="Rhea" id="RHEA-COMP:11480"/>
        <dbReference type="Rhea" id="RHEA-COMP:15913"/>
        <dbReference type="ChEBI" id="CHEBI:30616"/>
        <dbReference type="ChEBI" id="CHEBI:33019"/>
        <dbReference type="ChEBI" id="CHEBI:33384"/>
        <dbReference type="ChEBI" id="CHEBI:64479"/>
        <dbReference type="ChEBI" id="CHEBI:144955"/>
        <dbReference type="ChEBI" id="CHEBI:456215"/>
        <dbReference type="EC" id="6.2.1.72"/>
    </reaction>
    <physiologicalReaction direction="left-to-right" evidence="5">
        <dbReference type="Rhea" id="RHEA:61705"/>
    </physiologicalReaction>
</comment>
<comment type="cofactor">
    <cofactor evidence="4">
        <name>pantetheine 4'-phosphate</name>
        <dbReference type="ChEBI" id="CHEBI:47942"/>
    </cofactor>
</comment>
<comment type="pathway">
    <text evidence="2">Siderophore biosynthesis.</text>
</comment>
<comment type="domain">
    <text evidence="4">Modular protein that contains two adenylation domains which activate the amino acids into aminoacyl-AMP esters, two peptidyl carrier protein domains which bear a phosphopantetheinyl arm to attach the activated amino acids, three condensation domains and a thioesterase domain that may release the newly synthesized peptide from the enzyme.</text>
</comment>
<comment type="disruption phenotype">
    <text evidence="2">Mutant can still produce DHBA, but not vanchrobactin. Mutant is significantly impaired for growth under iron-limited conditions, and siderophore levels in supernatants are less than 20% of those detected in the parental strain.</text>
</comment>
<comment type="similarity">
    <text evidence="4">Belongs to the NRP synthetase family.</text>
</comment>
<sequence>MTFVRNKEMHNSSVQEDQWPLIGTQQGIWFAEQMMPNPEQFNVAHYVVIQGQIDIELFSNAVAIGLQGVDSLHCHYLESDGSVRQQFYPADEEGQWLESSTFHKPPCQKSRLGKWMKHDLRSGWTFSKKERFRHCLIDVGSSNAPQWFWYQRYHHIDVDGFSVNAISQYICQLYKHWRIGAAKPQEFSAFSDVIQEYQQFLDSAARQQAYDFWQTQAAHLPNVISLTTGSAANTSSSTITHTVPLIGGEWLTRYNPQLLPAELAMAMVFAYLHLHSGQEQVCVGVPFMRRMGNAATCAAGAVVNVLPVALSLHPQMSIIDVAREMNKTIRQVRRHQMYDAEQIQRDLGLVGQPLYGPILNFKPFEAALSLSGVETETHILSAGPIDEIEFSPVLDGQTLSVNITANSTKYSQESLELHAARFVAMVEQIANHPTQPLDLVELIPPSEKQQITLWSVGPQHEHGTEQTVLDVWQQTVESKPNEDALVFKQQRWTFDAFNHLIETRADQLITAGLRQGDIAGVALRRGPESVVTMLAILRAGAIYLPIDLDYPIERIESIVEQARPWCLVVEEDEQNMAYSSISYVPRFIALPELARIHTAPQPKPTISHSDVAYIIFTSGSTGHPKGVMNTHGALLNLLRSHQGSIFSAAIRKLATRRQLPEQAITVRAAHTTSFSFDASWEQVLWMLSGHTMYLYDDEQRKDAYELVQCVAEDNIDALDLPPSLFDQMLDSGLITNDHVPTLVLIGSEAIPQKLWSRVSEFPELLVENFYGPTEFTVDAISASLDADASPVIGRPIAGACVYVLDENLEPVAIGEVGELYLSGAGLAKGYLNQPSMTAERFVANPFAYGKIMYRTGDLVKWRDNGLLDFVGRCDHQIKIRGFRIELGDVESAINAIDGVNTTVVVAEPVGDTHRLLAYCTLEKGAQGESVQPAFTEQRLQSLIAQALPDYMQPANVMILDAFSLNVNGKIDRKALPKYSAGMRSERVAPITQPEQLLCDAITELLGVSDVGMSDDFFNLGGDSISAMSLGTRLRTAGYDLRPKAIFAARQLGMMAGQMVPLQQQQREKQEGIIRPLPMWQWFEETFSITTSYVQSVLVEVESDTQLAHLQASLVQLVANHSVCRLVQKEQQYHIEALQNLDVKNWVESVSVERLDGQRWWTVCLAQRSQSMSISSGQLLRLVMITERSGRKISDLAHHFLIDGVSWRICFRSCRHLTQAQVTGEVAVISEEVTGIHCWSKALYQHLAVAAAQMPFWRAQAQRAVAPIKDPVDKIRMTHWRTPLSHAVTQPLLELPTHQTNLDIEEMLLAAVTGVIARLYGCEEIKVNVESHGREECKEEIDLNQTLGWFTTEYPLIINVPKQGDYRERLREVKQSKRSVKDKGLGYMVLRYLDNPYRDELRTLANTRQPSLLFNYLGRFQSSDGQWSPQQYSGQFADTFAVTLNSERALQHPLELNIFVEESATPRLVLNWSWNAHLFSQQEMVSLSQQIESELLKIQQALQVGDSAELDLSVPADYTEPGITLRQASLLQHHYGKLADVLPALPLQEGLLFQSQLGDKNSSYNSTTRLTFQGQLSEHRVSEALNAVIRRHPQLLARFDSSILGRTVQVMTQVNPSWPLTRYDITNMSGDEQSALIDQLEKQELSRQFDLNDSTHSLLQAQLIFHGDQQSTLLLSAHHLVVDGWSTPILLNDFLSAYAQGVSNLPPVTVGYAHVVSQLTQRDKTVATELWGKVLADVQPSMAFDDIPLSEEVNEHQLWLSKHKTDQLNQCLRHHGLTMSTLMQGLWASILASMTGREEVVFGTPISGRFSRIAGIDEQIGLFSNTVPVRVTLQPHLSLSEQLEAHQAIQIQLLEHDELGLGEIQQLVGGKTLFDTLLVVENYPDHSRWYQQDFSGAKLMAIHNRGYTHYPLTILVLPGEQLHILFEYRDRVGVAKQIVQRFEQMLDEFMVSSDKPFAEWDLRLSGEIELQQRVNQTKTAVERTTLRDLMITQQQRSPHQLALIDSEHRFTYQALAEQVAAIADLLLQQGIKAGDIVAVALPRSATLSLAIYSIIECGAAYLPLDVGYPDERLAYMINDAKPALIITCSSFTSRFEALAALLLLDKLPAPVRAERQNRADGLTPSNAAYLLYTSGSTGNPKGVLVSHQAIVNRLKWMQHQYPLNSEDVVLQKTPCSFDVSVWEFFWPLLEGASLVMAPAEAHKDPEWLLQIIDDYHVTTMHFVPSMLAAFMASIEATHPTGFTVAPSLKQVFCSGEALAKELCHQYARRINAPLHNLYGPTEAAVDVTYYPAYGEALNASVGRSAPIGLPVWNTQVYVLDSFLRAVPIGVPGELYLAGEQLAIGYFNRSALTADRFIANPFTCGERMYRTGDVVRWLACGSIEYLGRSDDQIKIRGQRVELGEIGSALQALPAVKQAVVCAQTLSTHSGMLGADERQIIGYVIAHDMSVTNGEKLRTELSEHLPAHMVPAAIVLLDHYPLSANGKLDKKALPRPNDVAVRVGRNAHPGLETQLVTLFAQVLAVETLFADDDFLTLGGHSLLAMKLAADIRRALNLPVTVGQIMVNPTVEKLASLLLDDDAFNDPTLAGFGEVLPIRAGSGPALFCVNSASGFAWQYTGLPKYLTGHYPIYGLQSPRPGGAMATSETMEEVCDRLLPVLREIQPFGPYHLLGYSFGGIVAQKLAAKLQQQGEEVHFLGLLDTYPPEGQNWDGPMDEEKQYEIEREKEQFLAINELTDIELDEQRLAMFNEITANYEDAVRLLAQAQTSDYQGPAHLFVAQRTVPDGYDIDAHWQSFVGQLIKHQFDCSHEDILAPENVRQIGECLNTLLESKAALKK</sequence>